<reference key="1">
    <citation type="journal article" date="2005" name="Nature">
        <title>Genomic sequence of the pathogenic and allergenic filamentous fungus Aspergillus fumigatus.</title>
        <authorList>
            <person name="Nierman W.C."/>
            <person name="Pain A."/>
            <person name="Anderson M.J."/>
            <person name="Wortman J.R."/>
            <person name="Kim H.S."/>
            <person name="Arroyo J."/>
            <person name="Berriman M."/>
            <person name="Abe K."/>
            <person name="Archer D.B."/>
            <person name="Bermejo C."/>
            <person name="Bennett J.W."/>
            <person name="Bowyer P."/>
            <person name="Chen D."/>
            <person name="Collins M."/>
            <person name="Coulsen R."/>
            <person name="Davies R."/>
            <person name="Dyer P.S."/>
            <person name="Farman M.L."/>
            <person name="Fedorova N."/>
            <person name="Fedorova N.D."/>
            <person name="Feldblyum T.V."/>
            <person name="Fischer R."/>
            <person name="Fosker N."/>
            <person name="Fraser A."/>
            <person name="Garcia J.L."/>
            <person name="Garcia M.J."/>
            <person name="Goble A."/>
            <person name="Goldman G.H."/>
            <person name="Gomi K."/>
            <person name="Griffith-Jones S."/>
            <person name="Gwilliam R."/>
            <person name="Haas B.J."/>
            <person name="Haas H."/>
            <person name="Harris D.E."/>
            <person name="Horiuchi H."/>
            <person name="Huang J."/>
            <person name="Humphray S."/>
            <person name="Jimenez J."/>
            <person name="Keller N."/>
            <person name="Khouri H."/>
            <person name="Kitamoto K."/>
            <person name="Kobayashi T."/>
            <person name="Konzack S."/>
            <person name="Kulkarni R."/>
            <person name="Kumagai T."/>
            <person name="Lafton A."/>
            <person name="Latge J.-P."/>
            <person name="Li W."/>
            <person name="Lord A."/>
            <person name="Lu C."/>
            <person name="Majoros W.H."/>
            <person name="May G.S."/>
            <person name="Miller B.L."/>
            <person name="Mohamoud Y."/>
            <person name="Molina M."/>
            <person name="Monod M."/>
            <person name="Mouyna I."/>
            <person name="Mulligan S."/>
            <person name="Murphy L.D."/>
            <person name="O'Neil S."/>
            <person name="Paulsen I."/>
            <person name="Penalva M.A."/>
            <person name="Pertea M."/>
            <person name="Price C."/>
            <person name="Pritchard B.L."/>
            <person name="Quail M.A."/>
            <person name="Rabbinowitsch E."/>
            <person name="Rawlins N."/>
            <person name="Rajandream M.A."/>
            <person name="Reichard U."/>
            <person name="Renauld H."/>
            <person name="Robson G.D."/>
            <person name="Rodriguez de Cordoba S."/>
            <person name="Rodriguez-Pena J.M."/>
            <person name="Ronning C.M."/>
            <person name="Rutter S."/>
            <person name="Salzberg S.L."/>
            <person name="Sanchez M."/>
            <person name="Sanchez-Ferrero J.C."/>
            <person name="Saunders D."/>
            <person name="Seeger K."/>
            <person name="Squares R."/>
            <person name="Squares S."/>
            <person name="Takeuchi M."/>
            <person name="Tekaia F."/>
            <person name="Turner G."/>
            <person name="Vazquez de Aldana C.R."/>
            <person name="Weidman J."/>
            <person name="White O."/>
            <person name="Woodward J.R."/>
            <person name="Yu J.-H."/>
            <person name="Fraser C.M."/>
            <person name="Galagan J.E."/>
            <person name="Asai K."/>
            <person name="Machida M."/>
            <person name="Hall N."/>
            <person name="Barrell B.G."/>
            <person name="Denning D.W."/>
        </authorList>
    </citation>
    <scope>NUCLEOTIDE SEQUENCE [LARGE SCALE GENOMIC DNA]</scope>
    <source>
        <strain>ATCC MYA-4609 / CBS 101355 / FGSC A1100 / Af293</strain>
    </source>
</reference>
<feature type="transit peptide" description="Mitochondrion" evidence="1">
    <location>
        <begin position="1"/>
        <end position="62"/>
    </location>
</feature>
<feature type="chain" id="PRO_0000395772" description="Lon protease homolog, mitochondrial">
    <location>
        <begin position="63"/>
        <end position="1108"/>
    </location>
</feature>
<feature type="domain" description="Lon N-terminal" evidence="3">
    <location>
        <begin position="200"/>
        <end position="452"/>
    </location>
</feature>
<feature type="domain" description="Lon proteolytic" evidence="2">
    <location>
        <begin position="895"/>
        <end position="1081"/>
    </location>
</feature>
<feature type="region of interest" description="Disordered" evidence="4">
    <location>
        <begin position="24"/>
        <end position="192"/>
    </location>
</feature>
<feature type="region of interest" description="Disordered" evidence="4">
    <location>
        <begin position="299"/>
        <end position="318"/>
    </location>
</feature>
<feature type="region of interest" description="Disordered" evidence="4">
    <location>
        <begin position="821"/>
        <end position="862"/>
    </location>
</feature>
<feature type="compositionally biased region" description="Low complexity" evidence="4">
    <location>
        <begin position="36"/>
        <end position="53"/>
    </location>
</feature>
<feature type="compositionally biased region" description="Basic and acidic residues" evidence="4">
    <location>
        <begin position="78"/>
        <end position="103"/>
    </location>
</feature>
<feature type="compositionally biased region" description="Basic and acidic residues" evidence="4">
    <location>
        <begin position="119"/>
        <end position="146"/>
    </location>
</feature>
<feature type="compositionally biased region" description="Polar residues" evidence="4">
    <location>
        <begin position="161"/>
        <end position="171"/>
    </location>
</feature>
<feature type="compositionally biased region" description="Basic and acidic residues" evidence="4">
    <location>
        <begin position="174"/>
        <end position="188"/>
    </location>
</feature>
<feature type="compositionally biased region" description="Basic and acidic residues" evidence="4">
    <location>
        <begin position="309"/>
        <end position="318"/>
    </location>
</feature>
<feature type="compositionally biased region" description="Basic and acidic residues" evidence="4">
    <location>
        <begin position="821"/>
        <end position="855"/>
    </location>
</feature>
<feature type="active site" evidence="1">
    <location>
        <position position="987"/>
    </location>
</feature>
<feature type="active site" evidence="1">
    <location>
        <position position="1030"/>
    </location>
</feature>
<feature type="binding site" evidence="1">
    <location>
        <begin position="605"/>
        <end position="612"/>
    </location>
    <ligand>
        <name>ATP</name>
        <dbReference type="ChEBI" id="CHEBI:30616"/>
    </ligand>
</feature>
<name>LONM_ASPFU</name>
<protein>
    <recommendedName>
        <fullName evidence="1">Lon protease homolog, mitochondrial</fullName>
        <ecNumber evidence="1">3.4.21.53</ecNumber>
    </recommendedName>
</protein>
<proteinExistence type="inferred from homology"/>
<accession>Q4X0Z7</accession>
<sequence length="1108" mass="121963">MLRGQSLPWRAALHQTPRPTVLRPLLPFARNNGPVRSNLSISRLSRSPSLSPRAFSTSSIRRKEKPPSDEKEDSNLQEQKDPNEQKDSDRSPEGRRRSPDSTGREPGAPTSASGRRRDKVAGEKEQRGVEEDAKKENVSIEGKSDPTEDPSPIPVNGGGSSDTKSSASNGGNEDGGRKGKKGSGDRALQKPSVPEVYPQVMAIPIAKRPLFPGFYKAITIRDPNVATAIQEMMKRGQPYVGAFLFKDENADGDVIENLDDVYDVGVFAQITAAYPLRGEASGVTAVLYPHRRIKISSLLPPGEQSKAGNTEDKAPEKKGDVVASFEEGVAEPAPKDLYEPTSFLRKYPVSLVNVENLAEEPFDKKSAIIRAVTSEIVNVCKEIASLNPLFRDQISAFYTDQFPGNLSDEPAKLADFAAAVSAGELHEMQEVLEIMNIEERLPKALVVLKKELMNAQLQSKISKDVEAKIQKRQREYWLMEQMKGIKRELGIESDGKDKLVEKFKEKASKLAMPDAVKKVFDEEINKLAHLEPAASEFNVTRNYLDWLTQIPWGQKSVENFGIKHAMTVLDEDHYGLKDVKDRILEFIAVGKLRGTVEGKILCLVGPPGVGKTSIGKSIARALNRQYYRFSVGGLTDVAEIKGHRRTYVGALPGRIIQALKKCQTENPLILIDEVDKIGRGHQGDPSSALLELLDPEQNSSFLDHYMDVPVDLSKVLFVCTANVTDTIPRPLLDRMELIELSGYVADEKMAIAERYLAPAARELTGLKDVDVNLQKDAIEELIKSYARESGVRNLKKQIEKVYRKAAFKIVQDLGEEVLGEDKALTDEGKAAQEESKKETEEGDPKDPPADPEKSTTETPRLALKVPESVHLSIGKDSLTDYLGPPVFTADRLYDTFPPGVTMGLAWTSMGGAALYVESILENALTPESRPGIDITGNLQPVMKESTQIAYSFAKSVLAKQFPENKFFEKAKLHMHCPEGAVPKDGPSAGITMATSLLSLALDHPLDPTIAMTGELTVTGKVLRIGGLREKTVAARRAGAKKIIFPADNMSDWLELPENIKDGIEGHAVSWYSEVFNILFAELDKDAANKLWQKQLAGKPKKGPLEEDD</sequence>
<keyword id="KW-0067">ATP-binding</keyword>
<keyword id="KW-0238">DNA-binding</keyword>
<keyword id="KW-0378">Hydrolase</keyword>
<keyword id="KW-0496">Mitochondrion</keyword>
<keyword id="KW-0547">Nucleotide-binding</keyword>
<keyword id="KW-0645">Protease</keyword>
<keyword id="KW-1185">Reference proteome</keyword>
<keyword id="KW-0720">Serine protease</keyword>
<keyword id="KW-0809">Transit peptide</keyword>
<evidence type="ECO:0000255" key="1">
    <source>
        <dbReference type="HAMAP-Rule" id="MF_03120"/>
    </source>
</evidence>
<evidence type="ECO:0000255" key="2">
    <source>
        <dbReference type="PROSITE-ProRule" id="PRU01122"/>
    </source>
</evidence>
<evidence type="ECO:0000255" key="3">
    <source>
        <dbReference type="PROSITE-ProRule" id="PRU01123"/>
    </source>
</evidence>
<evidence type="ECO:0000256" key="4">
    <source>
        <dbReference type="SAM" id="MobiDB-lite"/>
    </source>
</evidence>
<gene>
    <name type="primary">pim1</name>
    <name type="ORF">AFUA_2G11740</name>
</gene>
<comment type="function">
    <text evidence="1">ATP-dependent serine protease that mediates the selective degradation of misfolded, unassembled or oxidatively damaged polypeptides as well as certain short-lived regulatory proteins in the mitochondrial matrix. May also have a chaperone function in the assembly of inner membrane protein complexes. Participates in the regulation of mitochondrial gene expression and in the maintenance of the integrity of the mitochondrial genome. Binds to mitochondrial DNA in a site-specific manner.</text>
</comment>
<comment type="catalytic activity">
    <reaction evidence="1">
        <text>Hydrolysis of proteins in presence of ATP.</text>
        <dbReference type="EC" id="3.4.21.53"/>
    </reaction>
</comment>
<comment type="subunit">
    <text evidence="1">Homohexamer or homoheptamer. Organized in a ring with a central cavity.</text>
</comment>
<comment type="subcellular location">
    <subcellularLocation>
        <location evidence="1">Mitochondrion matrix</location>
    </subcellularLocation>
</comment>
<comment type="similarity">
    <text evidence="1">Belongs to the peptidase S16 family.</text>
</comment>
<organism>
    <name type="scientific">Aspergillus fumigatus (strain ATCC MYA-4609 / CBS 101355 / FGSC A1100 / Af293)</name>
    <name type="common">Neosartorya fumigata</name>
    <dbReference type="NCBI Taxonomy" id="330879"/>
    <lineage>
        <taxon>Eukaryota</taxon>
        <taxon>Fungi</taxon>
        <taxon>Dikarya</taxon>
        <taxon>Ascomycota</taxon>
        <taxon>Pezizomycotina</taxon>
        <taxon>Eurotiomycetes</taxon>
        <taxon>Eurotiomycetidae</taxon>
        <taxon>Eurotiales</taxon>
        <taxon>Aspergillaceae</taxon>
        <taxon>Aspergillus</taxon>
        <taxon>Aspergillus subgen. Fumigati</taxon>
    </lineage>
</organism>
<dbReference type="EC" id="3.4.21.53" evidence="1"/>
<dbReference type="EMBL" id="AAHF01000001">
    <property type="protein sequence ID" value="EAL93468.1"/>
    <property type="molecule type" value="Genomic_DNA"/>
</dbReference>
<dbReference type="RefSeq" id="XP_755506.1">
    <property type="nucleotide sequence ID" value="XM_750413.1"/>
</dbReference>
<dbReference type="SMR" id="Q4X0Z7"/>
<dbReference type="FunCoup" id="Q4X0Z7">
    <property type="interactions" value="996"/>
</dbReference>
<dbReference type="STRING" id="330879.Q4X0Z7"/>
<dbReference type="MEROPS" id="S16.010"/>
<dbReference type="EnsemblFungi" id="EAL93468">
    <property type="protein sequence ID" value="EAL93468"/>
    <property type="gene ID" value="AFUA_2G11740"/>
</dbReference>
<dbReference type="GeneID" id="3513084"/>
<dbReference type="KEGG" id="afm:AFUA_2G11740"/>
<dbReference type="VEuPathDB" id="FungiDB:Afu2g11740"/>
<dbReference type="eggNOG" id="KOG2004">
    <property type="taxonomic scope" value="Eukaryota"/>
</dbReference>
<dbReference type="HOGENOM" id="CLU_004109_1_0_1"/>
<dbReference type="InParanoid" id="Q4X0Z7"/>
<dbReference type="OMA" id="VEWYQEV"/>
<dbReference type="OrthoDB" id="2411602at2759"/>
<dbReference type="Proteomes" id="UP000002530">
    <property type="component" value="Chromosome 2"/>
</dbReference>
<dbReference type="GO" id="GO:0005759">
    <property type="term" value="C:mitochondrial matrix"/>
    <property type="evidence" value="ECO:0000318"/>
    <property type="project" value="GO_Central"/>
</dbReference>
<dbReference type="GO" id="GO:0005524">
    <property type="term" value="F:ATP binding"/>
    <property type="evidence" value="ECO:0007669"/>
    <property type="project" value="UniProtKB-UniRule"/>
</dbReference>
<dbReference type="GO" id="GO:0016887">
    <property type="term" value="F:ATP hydrolysis activity"/>
    <property type="evidence" value="ECO:0007669"/>
    <property type="project" value="UniProtKB-UniRule"/>
</dbReference>
<dbReference type="GO" id="GO:0004176">
    <property type="term" value="F:ATP-dependent peptidase activity"/>
    <property type="evidence" value="ECO:0000318"/>
    <property type="project" value="GO_Central"/>
</dbReference>
<dbReference type="GO" id="GO:0043565">
    <property type="term" value="F:sequence-specific DNA binding"/>
    <property type="evidence" value="ECO:0007669"/>
    <property type="project" value="UniProtKB-UniRule"/>
</dbReference>
<dbReference type="GO" id="GO:0004252">
    <property type="term" value="F:serine-type endopeptidase activity"/>
    <property type="evidence" value="ECO:0007669"/>
    <property type="project" value="UniProtKB-UniRule"/>
</dbReference>
<dbReference type="GO" id="GO:0003697">
    <property type="term" value="F:single-stranded DNA binding"/>
    <property type="evidence" value="ECO:0000318"/>
    <property type="project" value="GO_Central"/>
</dbReference>
<dbReference type="GO" id="GO:0034599">
    <property type="term" value="P:cellular response to oxidative stress"/>
    <property type="evidence" value="ECO:0007669"/>
    <property type="project" value="UniProtKB-UniRule"/>
</dbReference>
<dbReference type="GO" id="GO:0051131">
    <property type="term" value="P:chaperone-mediated protein complex assembly"/>
    <property type="evidence" value="ECO:0000318"/>
    <property type="project" value="GO_Central"/>
</dbReference>
<dbReference type="GO" id="GO:0035694">
    <property type="term" value="P:mitochondrial protein catabolic process"/>
    <property type="evidence" value="ECO:0007669"/>
    <property type="project" value="EnsemblFungi"/>
</dbReference>
<dbReference type="GO" id="GO:0007005">
    <property type="term" value="P:mitochondrion organization"/>
    <property type="evidence" value="ECO:0000318"/>
    <property type="project" value="GO_Central"/>
</dbReference>
<dbReference type="GO" id="GO:0070407">
    <property type="term" value="P:oxidation-dependent protein catabolic process"/>
    <property type="evidence" value="ECO:0007669"/>
    <property type="project" value="UniProtKB-UniRule"/>
</dbReference>
<dbReference type="GO" id="GO:0006515">
    <property type="term" value="P:protein quality control for misfolded or incompletely synthesized proteins"/>
    <property type="evidence" value="ECO:0000318"/>
    <property type="project" value="GO_Central"/>
</dbReference>
<dbReference type="CDD" id="cd19500">
    <property type="entry name" value="RecA-like_Lon"/>
    <property type="match status" value="1"/>
</dbReference>
<dbReference type="FunFam" id="3.40.50.300:FF:000021">
    <property type="entry name" value="Lon protease homolog"/>
    <property type="match status" value="1"/>
</dbReference>
<dbReference type="FunFam" id="1.10.8.60:FF:000113">
    <property type="entry name" value="Lon protease homolog, mitochondrial"/>
    <property type="match status" value="1"/>
</dbReference>
<dbReference type="FunFam" id="1.20.5.5270:FF:000001">
    <property type="entry name" value="Lon protease homolog, mitochondrial"/>
    <property type="match status" value="1"/>
</dbReference>
<dbReference type="FunFam" id="1.20.58.1480:FF:000003">
    <property type="entry name" value="Lon protease homolog, mitochondrial"/>
    <property type="match status" value="1"/>
</dbReference>
<dbReference type="FunFam" id="2.30.130.40:FF:000006">
    <property type="entry name" value="Lon protease homolog, mitochondrial"/>
    <property type="match status" value="1"/>
</dbReference>
<dbReference type="FunFam" id="3.30.230.10:FF:000015">
    <property type="entry name" value="Lon protease homolog, mitochondrial"/>
    <property type="match status" value="1"/>
</dbReference>
<dbReference type="Gene3D" id="1.10.8.60">
    <property type="match status" value="1"/>
</dbReference>
<dbReference type="Gene3D" id="1.20.5.5270">
    <property type="match status" value="1"/>
</dbReference>
<dbReference type="Gene3D" id="1.20.58.1480">
    <property type="match status" value="1"/>
</dbReference>
<dbReference type="Gene3D" id="3.30.230.10">
    <property type="match status" value="1"/>
</dbReference>
<dbReference type="Gene3D" id="2.30.130.40">
    <property type="entry name" value="LON domain-like"/>
    <property type="match status" value="1"/>
</dbReference>
<dbReference type="Gene3D" id="3.40.50.300">
    <property type="entry name" value="P-loop containing nucleotide triphosphate hydrolases"/>
    <property type="match status" value="1"/>
</dbReference>
<dbReference type="HAMAP" id="MF_03120">
    <property type="entry name" value="lonm_euk"/>
    <property type="match status" value="1"/>
</dbReference>
<dbReference type="InterPro" id="IPR003593">
    <property type="entry name" value="AAA+_ATPase"/>
</dbReference>
<dbReference type="InterPro" id="IPR003959">
    <property type="entry name" value="ATPase_AAA_core"/>
</dbReference>
<dbReference type="InterPro" id="IPR004815">
    <property type="entry name" value="Lon_bac/euk-typ"/>
</dbReference>
<dbReference type="InterPro" id="IPR054594">
    <property type="entry name" value="Lon_lid"/>
</dbReference>
<dbReference type="InterPro" id="IPR008269">
    <property type="entry name" value="Lon_proteolytic"/>
</dbReference>
<dbReference type="InterPro" id="IPR027065">
    <property type="entry name" value="Lon_Prtase"/>
</dbReference>
<dbReference type="InterPro" id="IPR003111">
    <property type="entry name" value="Lon_prtase_N"/>
</dbReference>
<dbReference type="InterPro" id="IPR046336">
    <property type="entry name" value="Lon_prtase_N_sf"/>
</dbReference>
<dbReference type="InterPro" id="IPR027503">
    <property type="entry name" value="Lonm_euk"/>
</dbReference>
<dbReference type="InterPro" id="IPR027417">
    <property type="entry name" value="P-loop_NTPase"/>
</dbReference>
<dbReference type="InterPro" id="IPR008268">
    <property type="entry name" value="Peptidase_S16_AS"/>
</dbReference>
<dbReference type="InterPro" id="IPR015947">
    <property type="entry name" value="PUA-like_sf"/>
</dbReference>
<dbReference type="InterPro" id="IPR020568">
    <property type="entry name" value="Ribosomal_Su5_D2-typ_SF"/>
</dbReference>
<dbReference type="InterPro" id="IPR014721">
    <property type="entry name" value="Ribsml_uS5_D2-typ_fold_subgr"/>
</dbReference>
<dbReference type="NCBIfam" id="TIGR00763">
    <property type="entry name" value="lon"/>
    <property type="match status" value="1"/>
</dbReference>
<dbReference type="PANTHER" id="PTHR43718">
    <property type="entry name" value="LON PROTEASE"/>
    <property type="match status" value="1"/>
</dbReference>
<dbReference type="PANTHER" id="PTHR43718:SF2">
    <property type="entry name" value="LON PROTEASE HOMOLOG, MITOCHONDRIAL"/>
    <property type="match status" value="1"/>
</dbReference>
<dbReference type="Pfam" id="PF00004">
    <property type="entry name" value="AAA"/>
    <property type="match status" value="1"/>
</dbReference>
<dbReference type="Pfam" id="PF05362">
    <property type="entry name" value="Lon_C"/>
    <property type="match status" value="1"/>
</dbReference>
<dbReference type="Pfam" id="PF22667">
    <property type="entry name" value="Lon_lid"/>
    <property type="match status" value="1"/>
</dbReference>
<dbReference type="Pfam" id="PF02190">
    <property type="entry name" value="LON_substr_bdg"/>
    <property type="match status" value="1"/>
</dbReference>
<dbReference type="PRINTS" id="PR00830">
    <property type="entry name" value="ENDOLAPTASE"/>
</dbReference>
<dbReference type="SMART" id="SM00382">
    <property type="entry name" value="AAA"/>
    <property type="match status" value="1"/>
</dbReference>
<dbReference type="SMART" id="SM00464">
    <property type="entry name" value="LON"/>
    <property type="match status" value="1"/>
</dbReference>
<dbReference type="SUPFAM" id="SSF52540">
    <property type="entry name" value="P-loop containing nucleoside triphosphate hydrolases"/>
    <property type="match status" value="1"/>
</dbReference>
<dbReference type="SUPFAM" id="SSF88697">
    <property type="entry name" value="PUA domain-like"/>
    <property type="match status" value="1"/>
</dbReference>
<dbReference type="SUPFAM" id="SSF54211">
    <property type="entry name" value="Ribosomal protein S5 domain 2-like"/>
    <property type="match status" value="1"/>
</dbReference>
<dbReference type="PROSITE" id="PS51787">
    <property type="entry name" value="LON_N"/>
    <property type="match status" value="1"/>
</dbReference>
<dbReference type="PROSITE" id="PS51786">
    <property type="entry name" value="LON_PROTEOLYTIC"/>
    <property type="match status" value="1"/>
</dbReference>
<dbReference type="PROSITE" id="PS01046">
    <property type="entry name" value="LON_SER"/>
    <property type="match status" value="1"/>
</dbReference>